<dbReference type="EC" id="2.1.1.191" evidence="1"/>
<dbReference type="EMBL" id="CP000653">
    <property type="protein sequence ID" value="ABP60159.1"/>
    <property type="molecule type" value="Genomic_DNA"/>
</dbReference>
<dbReference type="RefSeq" id="WP_012016876.1">
    <property type="nucleotide sequence ID" value="NC_009436.1"/>
</dbReference>
<dbReference type="SMR" id="A4W8X9"/>
<dbReference type="STRING" id="399742.Ent638_1479"/>
<dbReference type="KEGG" id="ent:Ent638_1479"/>
<dbReference type="eggNOG" id="COG1092">
    <property type="taxonomic scope" value="Bacteria"/>
</dbReference>
<dbReference type="HOGENOM" id="CLU_014042_0_0_6"/>
<dbReference type="OrthoDB" id="9805492at2"/>
<dbReference type="Proteomes" id="UP000000230">
    <property type="component" value="Chromosome"/>
</dbReference>
<dbReference type="GO" id="GO:0005737">
    <property type="term" value="C:cytoplasm"/>
    <property type="evidence" value="ECO:0007669"/>
    <property type="project" value="UniProtKB-SubCell"/>
</dbReference>
<dbReference type="GO" id="GO:0003723">
    <property type="term" value="F:RNA binding"/>
    <property type="evidence" value="ECO:0007669"/>
    <property type="project" value="UniProtKB-KW"/>
</dbReference>
<dbReference type="GO" id="GO:0016434">
    <property type="term" value="F:rRNA (cytosine) methyltransferase activity"/>
    <property type="evidence" value="ECO:0007669"/>
    <property type="project" value="UniProtKB-UniRule"/>
</dbReference>
<dbReference type="CDD" id="cd02440">
    <property type="entry name" value="AdoMet_MTases"/>
    <property type="match status" value="1"/>
</dbReference>
<dbReference type="CDD" id="cd21153">
    <property type="entry name" value="PUA_RlmI"/>
    <property type="match status" value="1"/>
</dbReference>
<dbReference type="CDD" id="cd11572">
    <property type="entry name" value="RlmI_M_like"/>
    <property type="match status" value="1"/>
</dbReference>
<dbReference type="FunFam" id="2.30.130.10:FF:000005">
    <property type="entry name" value="Ribosomal RNA large subunit methyltransferase I"/>
    <property type="match status" value="1"/>
</dbReference>
<dbReference type="FunFam" id="3.30.750.80:FF:000002">
    <property type="entry name" value="Ribosomal RNA large subunit methyltransferase I"/>
    <property type="match status" value="1"/>
</dbReference>
<dbReference type="FunFam" id="3.40.50.150:FF:000044">
    <property type="entry name" value="Ribosomal RNA large subunit methyltransferase I"/>
    <property type="match status" value="1"/>
</dbReference>
<dbReference type="Gene3D" id="2.30.130.10">
    <property type="entry name" value="PUA domain"/>
    <property type="match status" value="1"/>
</dbReference>
<dbReference type="Gene3D" id="3.30.750.80">
    <property type="entry name" value="RNA methyltransferase domain (HRMD) like"/>
    <property type="match status" value="1"/>
</dbReference>
<dbReference type="Gene3D" id="3.40.50.150">
    <property type="entry name" value="Vaccinia Virus protein VP39"/>
    <property type="match status" value="1"/>
</dbReference>
<dbReference type="HAMAP" id="MF_01857">
    <property type="entry name" value="23SrRNA_methyltr_I"/>
    <property type="match status" value="1"/>
</dbReference>
<dbReference type="InterPro" id="IPR002478">
    <property type="entry name" value="PUA"/>
</dbReference>
<dbReference type="InterPro" id="IPR015947">
    <property type="entry name" value="PUA-like_sf"/>
</dbReference>
<dbReference type="InterPro" id="IPR036974">
    <property type="entry name" value="PUA_sf"/>
</dbReference>
<dbReference type="InterPro" id="IPR023542">
    <property type="entry name" value="RLMI"/>
</dbReference>
<dbReference type="InterPro" id="IPR041532">
    <property type="entry name" value="RlmI-like_PUA"/>
</dbReference>
<dbReference type="InterPro" id="IPR019614">
    <property type="entry name" value="SAM-dep_methyl-trfase"/>
</dbReference>
<dbReference type="InterPro" id="IPR029063">
    <property type="entry name" value="SAM-dependent_MTases_sf"/>
</dbReference>
<dbReference type="NCBIfam" id="NF011707">
    <property type="entry name" value="PRK15128.1"/>
    <property type="match status" value="1"/>
</dbReference>
<dbReference type="PANTHER" id="PTHR42873">
    <property type="entry name" value="RIBOSOMAL RNA LARGE SUBUNIT METHYLTRANSFERASE"/>
    <property type="match status" value="1"/>
</dbReference>
<dbReference type="PANTHER" id="PTHR42873:SF1">
    <property type="entry name" value="S-ADENOSYLMETHIONINE-DEPENDENT METHYLTRANSFERASE DOMAIN-CONTAINING PROTEIN"/>
    <property type="match status" value="1"/>
</dbReference>
<dbReference type="Pfam" id="PF10672">
    <property type="entry name" value="Methyltrans_SAM"/>
    <property type="match status" value="1"/>
</dbReference>
<dbReference type="Pfam" id="PF17785">
    <property type="entry name" value="PUA_3"/>
    <property type="match status" value="1"/>
</dbReference>
<dbReference type="SMART" id="SM00359">
    <property type="entry name" value="PUA"/>
    <property type="match status" value="1"/>
</dbReference>
<dbReference type="SUPFAM" id="SSF88697">
    <property type="entry name" value="PUA domain-like"/>
    <property type="match status" value="1"/>
</dbReference>
<dbReference type="SUPFAM" id="SSF53335">
    <property type="entry name" value="S-adenosyl-L-methionine-dependent methyltransferases"/>
    <property type="match status" value="1"/>
</dbReference>
<dbReference type="PROSITE" id="PS50890">
    <property type="entry name" value="PUA"/>
    <property type="match status" value="1"/>
</dbReference>
<keyword id="KW-0963">Cytoplasm</keyword>
<keyword id="KW-0489">Methyltransferase</keyword>
<keyword id="KW-0694">RNA-binding</keyword>
<keyword id="KW-0698">rRNA processing</keyword>
<keyword id="KW-0949">S-adenosyl-L-methionine</keyword>
<keyword id="KW-0808">Transferase</keyword>
<accession>A4W8X9</accession>
<gene>
    <name evidence="1" type="primary">rlmI</name>
    <name type="ordered locus">Ent638_1479</name>
</gene>
<protein>
    <recommendedName>
        <fullName evidence="1">Ribosomal RNA large subunit methyltransferase I</fullName>
        <ecNumber evidence="1">2.1.1.191</ecNumber>
    </recommendedName>
    <alternativeName>
        <fullName evidence="1">23S rRNA m5C1962 methyltransferase</fullName>
    </alternativeName>
    <alternativeName>
        <fullName evidence="1">rRNA (cytosine-C(5)-)-methyltransferase RlmI</fullName>
    </alternativeName>
</protein>
<comment type="function">
    <text evidence="1">Specifically methylates the cytosine at position 1962 (m5C1962) of 23S rRNA.</text>
</comment>
<comment type="catalytic activity">
    <reaction evidence="1">
        <text>cytidine(1962) in 23S rRNA + S-adenosyl-L-methionine = 5-methylcytidine(1962) in 23S rRNA + S-adenosyl-L-homocysteine + H(+)</text>
        <dbReference type="Rhea" id="RHEA:42912"/>
        <dbReference type="Rhea" id="RHEA-COMP:10382"/>
        <dbReference type="Rhea" id="RHEA-COMP:10386"/>
        <dbReference type="ChEBI" id="CHEBI:15378"/>
        <dbReference type="ChEBI" id="CHEBI:57856"/>
        <dbReference type="ChEBI" id="CHEBI:59789"/>
        <dbReference type="ChEBI" id="CHEBI:74483"/>
        <dbReference type="ChEBI" id="CHEBI:82748"/>
        <dbReference type="EC" id="2.1.1.191"/>
    </reaction>
</comment>
<comment type="subcellular location">
    <subcellularLocation>
        <location evidence="1">Cytoplasm</location>
    </subcellularLocation>
</comment>
<comment type="similarity">
    <text evidence="1">Belongs to the methyltransferase superfamily. RlmI family.</text>
</comment>
<feature type="chain" id="PRO_0000366221" description="Ribosomal RNA large subunit methyltransferase I">
    <location>
        <begin position="1"/>
        <end position="396"/>
    </location>
</feature>
<feature type="domain" description="PUA" evidence="1">
    <location>
        <begin position="2"/>
        <end position="81"/>
    </location>
</feature>
<organism>
    <name type="scientific">Enterobacter sp. (strain 638)</name>
    <dbReference type="NCBI Taxonomy" id="399742"/>
    <lineage>
        <taxon>Bacteria</taxon>
        <taxon>Pseudomonadati</taxon>
        <taxon>Pseudomonadota</taxon>
        <taxon>Gammaproteobacteria</taxon>
        <taxon>Enterobacterales</taxon>
        <taxon>Enterobacteriaceae</taxon>
        <taxon>Enterobacter</taxon>
    </lineage>
</organism>
<reference key="1">
    <citation type="journal article" date="2010" name="PLoS Genet.">
        <title>Genome sequence of the plant growth promoting endophytic bacterium Enterobacter sp. 638.</title>
        <authorList>
            <person name="Taghavi S."/>
            <person name="van der Lelie D."/>
            <person name="Hoffman A."/>
            <person name="Zhang Y.B."/>
            <person name="Walla M.D."/>
            <person name="Vangronsveld J."/>
            <person name="Newman L."/>
            <person name="Monchy S."/>
        </authorList>
    </citation>
    <scope>NUCLEOTIDE SEQUENCE [LARGE SCALE GENOMIC DNA]</scope>
    <source>
        <strain>638</strain>
    </source>
</reference>
<name>RLMI_ENT38</name>
<sequence length="396" mass="44345">MSVRLVLTKGREKSLLRRHPWVFSGAVARMEGKASLGETIDIVDHQGKWLARGAYSPASQIRARVWTFDKDETIDIAFFTRRLQQAQQWRDWLAKRDGLDSYRLIAGESDGMPGVTIDRFANFLVLQLLSAGAEYQRAALISALQTLYPECAIYDRSDVAVRKKEGMELTQGTVTGELPPALLPIEEHGMKLFVDIQGGHKTGYYLDQRDSRLATRQYVKDKRVLNCFSYTGGFAVSALMGGCSQVVSVDTSQEALDVAKQNVELNKLDLSKAEFVRDDVFKLLRKYRDQGEKFDVIVMDPPKFVENKSQLMGACRGYKDINMLAIQLLNPGGILLTFSCSGLMTTDLFQKLVADAAVDAGRDVQFIEQFRQAADHPVIATYPEGLYLKGFACRVM</sequence>
<proteinExistence type="inferred from homology"/>
<evidence type="ECO:0000255" key="1">
    <source>
        <dbReference type="HAMAP-Rule" id="MF_01857"/>
    </source>
</evidence>